<proteinExistence type="inferred from homology"/>
<evidence type="ECO:0000255" key="1">
    <source>
        <dbReference type="HAMAP-Rule" id="MF_00145"/>
    </source>
</evidence>
<feature type="chain" id="PRO_0000145902" description="Phosphoglycerate kinase">
    <location>
        <begin position="1"/>
        <end position="394"/>
    </location>
</feature>
<feature type="binding site" evidence="1">
    <location>
        <begin position="21"/>
        <end position="23"/>
    </location>
    <ligand>
        <name>substrate</name>
    </ligand>
</feature>
<feature type="binding site" evidence="1">
    <location>
        <position position="36"/>
    </location>
    <ligand>
        <name>substrate</name>
    </ligand>
</feature>
<feature type="binding site" evidence="1">
    <location>
        <begin position="59"/>
        <end position="62"/>
    </location>
    <ligand>
        <name>substrate</name>
    </ligand>
</feature>
<feature type="binding site" evidence="1">
    <location>
        <position position="118"/>
    </location>
    <ligand>
        <name>substrate</name>
    </ligand>
</feature>
<feature type="binding site" evidence="1">
    <location>
        <position position="151"/>
    </location>
    <ligand>
        <name>substrate</name>
    </ligand>
</feature>
<feature type="binding site" evidence="1">
    <location>
        <position position="201"/>
    </location>
    <ligand>
        <name>ATP</name>
        <dbReference type="ChEBI" id="CHEBI:30616"/>
    </ligand>
</feature>
<feature type="binding site" evidence="1">
    <location>
        <position position="323"/>
    </location>
    <ligand>
        <name>ATP</name>
        <dbReference type="ChEBI" id="CHEBI:30616"/>
    </ligand>
</feature>
<feature type="binding site" evidence="1">
    <location>
        <begin position="350"/>
        <end position="353"/>
    </location>
    <ligand>
        <name>ATP</name>
        <dbReference type="ChEBI" id="CHEBI:30616"/>
    </ligand>
</feature>
<feature type="modified residue" description="Phosphoserine" evidence="1">
    <location>
        <position position="183"/>
    </location>
</feature>
<feature type="modified residue" description="Phosphothreonine" evidence="1">
    <location>
        <position position="299"/>
    </location>
</feature>
<sequence>MNKQSVRDVELQGKKVFCRVDFNVPMKDGVVTDDTRIRAALPTIQLLAEKGARIILASHLGRPKGEVVEELRLDPVAARLQELLGKPVAKVNVAHGPEAEQAANELKDGDVLLLENVRFYPGEEKNDPELAKAFASLADVYVNDAFGAAHRAHASTEGIAHHVTAVAGLLMEKELEVLGKALSNPERPFTAIIGGAKVKDKIGVIENLLDKVDNLIIGGGLAYTFIKAQGHEIGKSLLEADKMDLALSFMEKAKEKGVNFYVPQDAIVADDFSNDANTKAVDIDQIPADWEALDIGPKTRETYRNVIQSSKLVIWNGPMGVFELDAFAGGTKAVAEALADANDTYSVIGGGDSAAAVEKFGLANQMSHISTGGGASLEFMEGKALPGVVALNDK</sequence>
<name>PGK_HALH5</name>
<organism>
    <name type="scientific">Halalkalibacterium halodurans (strain ATCC BAA-125 / DSM 18197 / FERM 7344 / JCM 9153 / C-125)</name>
    <name type="common">Bacillus halodurans</name>
    <dbReference type="NCBI Taxonomy" id="272558"/>
    <lineage>
        <taxon>Bacteria</taxon>
        <taxon>Bacillati</taxon>
        <taxon>Bacillota</taxon>
        <taxon>Bacilli</taxon>
        <taxon>Bacillales</taxon>
        <taxon>Bacillaceae</taxon>
        <taxon>Halalkalibacterium (ex Joshi et al. 2022)</taxon>
    </lineage>
</organism>
<protein>
    <recommendedName>
        <fullName evidence="1">Phosphoglycerate kinase</fullName>
        <ecNumber evidence="1">2.7.2.3</ecNumber>
    </recommendedName>
</protein>
<reference key="1">
    <citation type="journal article" date="2000" name="Nucleic Acids Res.">
        <title>Complete genome sequence of the alkaliphilic bacterium Bacillus halodurans and genomic sequence comparison with Bacillus subtilis.</title>
        <authorList>
            <person name="Takami H."/>
            <person name="Nakasone K."/>
            <person name="Takaki Y."/>
            <person name="Maeno G."/>
            <person name="Sasaki R."/>
            <person name="Masui N."/>
            <person name="Fuji F."/>
            <person name="Hirama C."/>
            <person name="Nakamura Y."/>
            <person name="Ogasawara N."/>
            <person name="Kuhara S."/>
            <person name="Horikoshi K."/>
        </authorList>
    </citation>
    <scope>NUCLEOTIDE SEQUENCE [LARGE SCALE GENOMIC DNA]</scope>
    <source>
        <strain>ATCC BAA-125 / DSM 18197 / FERM 7344 / JCM 9153 / C-125</strain>
    </source>
</reference>
<keyword id="KW-0067">ATP-binding</keyword>
<keyword id="KW-0963">Cytoplasm</keyword>
<keyword id="KW-0324">Glycolysis</keyword>
<keyword id="KW-0418">Kinase</keyword>
<keyword id="KW-0547">Nucleotide-binding</keyword>
<keyword id="KW-0597">Phosphoprotein</keyword>
<keyword id="KW-1185">Reference proteome</keyword>
<keyword id="KW-0808">Transferase</keyword>
<comment type="catalytic activity">
    <reaction evidence="1">
        <text>(2R)-3-phosphoglycerate + ATP = (2R)-3-phospho-glyceroyl phosphate + ADP</text>
        <dbReference type="Rhea" id="RHEA:14801"/>
        <dbReference type="ChEBI" id="CHEBI:30616"/>
        <dbReference type="ChEBI" id="CHEBI:57604"/>
        <dbReference type="ChEBI" id="CHEBI:58272"/>
        <dbReference type="ChEBI" id="CHEBI:456216"/>
        <dbReference type="EC" id="2.7.2.3"/>
    </reaction>
</comment>
<comment type="pathway">
    <text evidence="1">Carbohydrate degradation; glycolysis; pyruvate from D-glyceraldehyde 3-phosphate: step 2/5.</text>
</comment>
<comment type="subunit">
    <text evidence="1">Monomer.</text>
</comment>
<comment type="subcellular location">
    <subcellularLocation>
        <location evidence="1">Cytoplasm</location>
    </subcellularLocation>
</comment>
<comment type="similarity">
    <text evidence="1">Belongs to the phosphoglycerate kinase family.</text>
</comment>
<gene>
    <name evidence="1" type="primary">pgk</name>
    <name type="ordered locus">BH3559</name>
</gene>
<dbReference type="EC" id="2.7.2.3" evidence="1"/>
<dbReference type="EMBL" id="BA000004">
    <property type="protein sequence ID" value="BAB07278.1"/>
    <property type="molecule type" value="Genomic_DNA"/>
</dbReference>
<dbReference type="PIR" id="G84094">
    <property type="entry name" value="G84094"/>
</dbReference>
<dbReference type="RefSeq" id="WP_010899688.1">
    <property type="nucleotide sequence ID" value="NC_002570.2"/>
</dbReference>
<dbReference type="SMR" id="Q9K714"/>
<dbReference type="STRING" id="272558.gene:10729472"/>
<dbReference type="KEGG" id="bha:BH3559"/>
<dbReference type="eggNOG" id="COG0126">
    <property type="taxonomic scope" value="Bacteria"/>
</dbReference>
<dbReference type="HOGENOM" id="CLU_025427_0_2_9"/>
<dbReference type="OrthoDB" id="9808460at2"/>
<dbReference type="UniPathway" id="UPA00109">
    <property type="reaction ID" value="UER00185"/>
</dbReference>
<dbReference type="Proteomes" id="UP000001258">
    <property type="component" value="Chromosome"/>
</dbReference>
<dbReference type="GO" id="GO:0005829">
    <property type="term" value="C:cytosol"/>
    <property type="evidence" value="ECO:0007669"/>
    <property type="project" value="TreeGrafter"/>
</dbReference>
<dbReference type="GO" id="GO:0043531">
    <property type="term" value="F:ADP binding"/>
    <property type="evidence" value="ECO:0007669"/>
    <property type="project" value="TreeGrafter"/>
</dbReference>
<dbReference type="GO" id="GO:0005524">
    <property type="term" value="F:ATP binding"/>
    <property type="evidence" value="ECO:0007669"/>
    <property type="project" value="UniProtKB-KW"/>
</dbReference>
<dbReference type="GO" id="GO:0004618">
    <property type="term" value="F:phosphoglycerate kinase activity"/>
    <property type="evidence" value="ECO:0007669"/>
    <property type="project" value="UniProtKB-UniRule"/>
</dbReference>
<dbReference type="GO" id="GO:0006094">
    <property type="term" value="P:gluconeogenesis"/>
    <property type="evidence" value="ECO:0007669"/>
    <property type="project" value="TreeGrafter"/>
</dbReference>
<dbReference type="GO" id="GO:0006096">
    <property type="term" value="P:glycolytic process"/>
    <property type="evidence" value="ECO:0007669"/>
    <property type="project" value="UniProtKB-UniRule"/>
</dbReference>
<dbReference type="CDD" id="cd00318">
    <property type="entry name" value="Phosphoglycerate_kinase"/>
    <property type="match status" value="1"/>
</dbReference>
<dbReference type="FunFam" id="3.40.50.1260:FF:000001">
    <property type="entry name" value="Phosphoglycerate kinase"/>
    <property type="match status" value="1"/>
</dbReference>
<dbReference type="FunFam" id="3.40.50.1260:FF:000002">
    <property type="entry name" value="Phosphoglycerate kinase"/>
    <property type="match status" value="1"/>
</dbReference>
<dbReference type="Gene3D" id="3.40.50.1260">
    <property type="entry name" value="Phosphoglycerate kinase, N-terminal domain"/>
    <property type="match status" value="2"/>
</dbReference>
<dbReference type="HAMAP" id="MF_00145">
    <property type="entry name" value="Phosphoglyc_kinase"/>
    <property type="match status" value="1"/>
</dbReference>
<dbReference type="InterPro" id="IPR001576">
    <property type="entry name" value="Phosphoglycerate_kinase"/>
</dbReference>
<dbReference type="InterPro" id="IPR015911">
    <property type="entry name" value="Phosphoglycerate_kinase_CS"/>
</dbReference>
<dbReference type="InterPro" id="IPR015824">
    <property type="entry name" value="Phosphoglycerate_kinase_N"/>
</dbReference>
<dbReference type="InterPro" id="IPR036043">
    <property type="entry name" value="Phosphoglycerate_kinase_sf"/>
</dbReference>
<dbReference type="PANTHER" id="PTHR11406">
    <property type="entry name" value="PHOSPHOGLYCERATE KINASE"/>
    <property type="match status" value="1"/>
</dbReference>
<dbReference type="PANTHER" id="PTHR11406:SF23">
    <property type="entry name" value="PHOSPHOGLYCERATE KINASE 1, CHLOROPLASTIC-RELATED"/>
    <property type="match status" value="1"/>
</dbReference>
<dbReference type="Pfam" id="PF00162">
    <property type="entry name" value="PGK"/>
    <property type="match status" value="1"/>
</dbReference>
<dbReference type="PIRSF" id="PIRSF000724">
    <property type="entry name" value="Pgk"/>
    <property type="match status" value="1"/>
</dbReference>
<dbReference type="PRINTS" id="PR00477">
    <property type="entry name" value="PHGLYCKINASE"/>
</dbReference>
<dbReference type="SUPFAM" id="SSF53748">
    <property type="entry name" value="Phosphoglycerate kinase"/>
    <property type="match status" value="1"/>
</dbReference>
<dbReference type="PROSITE" id="PS00111">
    <property type="entry name" value="PGLYCERATE_KINASE"/>
    <property type="match status" value="1"/>
</dbReference>
<accession>Q9K714</accession>